<organism>
    <name type="scientific">Streptococcus gordonii (strain Challis / ATCC 35105 / BCRC 15272 / CH1 / DL1 / V288)</name>
    <dbReference type="NCBI Taxonomy" id="467705"/>
    <lineage>
        <taxon>Bacteria</taxon>
        <taxon>Bacillati</taxon>
        <taxon>Bacillota</taxon>
        <taxon>Bacilli</taxon>
        <taxon>Lactobacillales</taxon>
        <taxon>Streptococcaceae</taxon>
        <taxon>Streptococcus</taxon>
    </lineage>
</organism>
<comment type="similarity">
    <text evidence="1">Belongs to the universal ribosomal protein uL29 family.</text>
</comment>
<protein>
    <recommendedName>
        <fullName evidence="1">Large ribosomal subunit protein uL29</fullName>
    </recommendedName>
    <alternativeName>
        <fullName evidence="2">50S ribosomal protein L29</fullName>
    </alternativeName>
</protein>
<proteinExistence type="inferred from homology"/>
<keyword id="KW-1185">Reference proteome</keyword>
<keyword id="KW-0687">Ribonucleoprotein</keyword>
<keyword id="KW-0689">Ribosomal protein</keyword>
<feature type="chain" id="PRO_1000079912" description="Large ribosomal subunit protein uL29">
    <location>
        <begin position="1"/>
        <end position="68"/>
    </location>
</feature>
<reference key="1">
    <citation type="journal article" date="2007" name="J. Bacteriol.">
        <title>Genome-wide transcriptional changes in Streptococcus gordonii in response to competence signaling peptide.</title>
        <authorList>
            <person name="Vickerman M.M."/>
            <person name="Iobst S."/>
            <person name="Jesionowski A.M."/>
            <person name="Gill S.R."/>
        </authorList>
    </citation>
    <scope>NUCLEOTIDE SEQUENCE [LARGE SCALE GENOMIC DNA]</scope>
    <source>
        <strain>Challis / ATCC 35105 / BCRC 15272 / CH1 / DL1 / V288</strain>
    </source>
</reference>
<gene>
    <name evidence="1" type="primary">rpmC</name>
    <name type="ordered locus">SGO_1977</name>
</gene>
<evidence type="ECO:0000255" key="1">
    <source>
        <dbReference type="HAMAP-Rule" id="MF_00374"/>
    </source>
</evidence>
<evidence type="ECO:0000305" key="2"/>
<dbReference type="EMBL" id="CP000725">
    <property type="protein sequence ID" value="ABV10113.1"/>
    <property type="molecule type" value="Genomic_DNA"/>
</dbReference>
<dbReference type="RefSeq" id="WP_003071328.1">
    <property type="nucleotide sequence ID" value="NC_009785.1"/>
</dbReference>
<dbReference type="SMR" id="A8AZL7"/>
<dbReference type="STRING" id="467705.SGO_1977"/>
<dbReference type="GeneID" id="93847832"/>
<dbReference type="KEGG" id="sgo:SGO_1977"/>
<dbReference type="eggNOG" id="COG0255">
    <property type="taxonomic scope" value="Bacteria"/>
</dbReference>
<dbReference type="HOGENOM" id="CLU_158491_5_2_9"/>
<dbReference type="Proteomes" id="UP000001131">
    <property type="component" value="Chromosome"/>
</dbReference>
<dbReference type="GO" id="GO:0022625">
    <property type="term" value="C:cytosolic large ribosomal subunit"/>
    <property type="evidence" value="ECO:0007669"/>
    <property type="project" value="TreeGrafter"/>
</dbReference>
<dbReference type="GO" id="GO:0003735">
    <property type="term" value="F:structural constituent of ribosome"/>
    <property type="evidence" value="ECO:0007669"/>
    <property type="project" value="InterPro"/>
</dbReference>
<dbReference type="GO" id="GO:0006412">
    <property type="term" value="P:translation"/>
    <property type="evidence" value="ECO:0007669"/>
    <property type="project" value="UniProtKB-UniRule"/>
</dbReference>
<dbReference type="CDD" id="cd00427">
    <property type="entry name" value="Ribosomal_L29_HIP"/>
    <property type="match status" value="1"/>
</dbReference>
<dbReference type="FunFam" id="1.10.287.310:FF:000001">
    <property type="entry name" value="50S ribosomal protein L29"/>
    <property type="match status" value="1"/>
</dbReference>
<dbReference type="Gene3D" id="1.10.287.310">
    <property type="match status" value="1"/>
</dbReference>
<dbReference type="HAMAP" id="MF_00374">
    <property type="entry name" value="Ribosomal_uL29"/>
    <property type="match status" value="1"/>
</dbReference>
<dbReference type="InterPro" id="IPR050063">
    <property type="entry name" value="Ribosomal_protein_uL29"/>
</dbReference>
<dbReference type="InterPro" id="IPR001854">
    <property type="entry name" value="Ribosomal_uL29"/>
</dbReference>
<dbReference type="InterPro" id="IPR018254">
    <property type="entry name" value="Ribosomal_uL29_CS"/>
</dbReference>
<dbReference type="InterPro" id="IPR036049">
    <property type="entry name" value="Ribosomal_uL29_sf"/>
</dbReference>
<dbReference type="NCBIfam" id="TIGR00012">
    <property type="entry name" value="L29"/>
    <property type="match status" value="1"/>
</dbReference>
<dbReference type="PANTHER" id="PTHR10916">
    <property type="entry name" value="60S RIBOSOMAL PROTEIN L35/50S RIBOSOMAL PROTEIN L29"/>
    <property type="match status" value="1"/>
</dbReference>
<dbReference type="PANTHER" id="PTHR10916:SF0">
    <property type="entry name" value="LARGE RIBOSOMAL SUBUNIT PROTEIN UL29C"/>
    <property type="match status" value="1"/>
</dbReference>
<dbReference type="Pfam" id="PF00831">
    <property type="entry name" value="Ribosomal_L29"/>
    <property type="match status" value="1"/>
</dbReference>
<dbReference type="SUPFAM" id="SSF46561">
    <property type="entry name" value="Ribosomal protein L29 (L29p)"/>
    <property type="match status" value="1"/>
</dbReference>
<dbReference type="PROSITE" id="PS00579">
    <property type="entry name" value="RIBOSOMAL_L29"/>
    <property type="match status" value="1"/>
</dbReference>
<name>RL29_STRGC</name>
<accession>A8AZL7</accession>
<sequence length="68" mass="7985">MKLNEVKEFVKELRGLSQEELAKRENELKKELFELRFQAAAGQLEQTARLKEVKKQIARIKTVQSEVK</sequence>